<name>THYX_EHRRG</name>
<protein>
    <recommendedName>
        <fullName evidence="1">Flavin-dependent thymidylate synthase</fullName>
        <shortName evidence="1">FDTS</shortName>
        <ecNumber evidence="1">2.1.1.148</ecNumber>
    </recommendedName>
    <alternativeName>
        <fullName evidence="1">FAD-dependent thymidylate synthase</fullName>
    </alternativeName>
    <alternativeName>
        <fullName evidence="1">Thymidylate synthase ThyX</fullName>
        <shortName evidence="1">TS</shortName>
        <shortName evidence="1">TSase</shortName>
    </alternativeName>
</protein>
<sequence length="297" mass="34762">MLVLSIRIKVWQTMESEITKRIVVPELEDILYKEHKVLDKGFVRLVDYMGSDESVVQAARISYGRGTKSVSQDAALINYLMRHSHTTPFEMCEIKFHIKLPIFVARQWVRHRTANVNEYSARYSVLDHEFYIPELDHVATQSEDNAQGRGNSLSNEDAQYVTDLLKRDSDMVYETYNKFLIKGVSREISRISLTLNYYTEWYWKIDLHNLLHFLRLRSDVHAQYEIRVYAETMLEIVKKWVPLTYAAFVEYCLESQSFSKSALSVVKKLIAGEDVAREDTGIGKREWRELMDVLADK</sequence>
<dbReference type="EC" id="2.1.1.148" evidence="1"/>
<dbReference type="EMBL" id="CR925677">
    <property type="protein sequence ID" value="CAI28158.1"/>
    <property type="molecule type" value="Genomic_DNA"/>
</dbReference>
<dbReference type="SMR" id="Q5FG35"/>
<dbReference type="KEGG" id="erg:ERGA_CDS_07060"/>
<dbReference type="HOGENOM" id="CLU_067790_0_0_5"/>
<dbReference type="UniPathway" id="UPA00575"/>
<dbReference type="Proteomes" id="UP000000533">
    <property type="component" value="Chromosome"/>
</dbReference>
<dbReference type="GO" id="GO:0050660">
    <property type="term" value="F:flavin adenine dinucleotide binding"/>
    <property type="evidence" value="ECO:0007669"/>
    <property type="project" value="InterPro"/>
</dbReference>
<dbReference type="GO" id="GO:0070402">
    <property type="term" value="F:NADPH binding"/>
    <property type="evidence" value="ECO:0007669"/>
    <property type="project" value="TreeGrafter"/>
</dbReference>
<dbReference type="GO" id="GO:0050797">
    <property type="term" value="F:thymidylate synthase (FAD) activity"/>
    <property type="evidence" value="ECO:0007669"/>
    <property type="project" value="UniProtKB-UniRule"/>
</dbReference>
<dbReference type="GO" id="GO:0004799">
    <property type="term" value="F:thymidylate synthase activity"/>
    <property type="evidence" value="ECO:0007669"/>
    <property type="project" value="TreeGrafter"/>
</dbReference>
<dbReference type="GO" id="GO:0006231">
    <property type="term" value="P:dTMP biosynthetic process"/>
    <property type="evidence" value="ECO:0007669"/>
    <property type="project" value="UniProtKB-UniRule"/>
</dbReference>
<dbReference type="GO" id="GO:0006235">
    <property type="term" value="P:dTTP biosynthetic process"/>
    <property type="evidence" value="ECO:0007669"/>
    <property type="project" value="UniProtKB-UniRule"/>
</dbReference>
<dbReference type="GO" id="GO:0032259">
    <property type="term" value="P:methylation"/>
    <property type="evidence" value="ECO:0007669"/>
    <property type="project" value="UniProtKB-KW"/>
</dbReference>
<dbReference type="CDD" id="cd20175">
    <property type="entry name" value="ThyX"/>
    <property type="match status" value="1"/>
</dbReference>
<dbReference type="Gene3D" id="3.30.1360.170">
    <property type="match status" value="1"/>
</dbReference>
<dbReference type="HAMAP" id="MF_01408">
    <property type="entry name" value="ThyX"/>
    <property type="match status" value="1"/>
</dbReference>
<dbReference type="InterPro" id="IPR003669">
    <property type="entry name" value="Thymidylate_synthase_ThyX"/>
</dbReference>
<dbReference type="InterPro" id="IPR036098">
    <property type="entry name" value="Thymidylate_synthase_ThyX_sf"/>
</dbReference>
<dbReference type="NCBIfam" id="TIGR02170">
    <property type="entry name" value="thyX"/>
    <property type="match status" value="1"/>
</dbReference>
<dbReference type="PANTHER" id="PTHR34934">
    <property type="entry name" value="FLAVIN-DEPENDENT THYMIDYLATE SYNTHASE"/>
    <property type="match status" value="1"/>
</dbReference>
<dbReference type="PANTHER" id="PTHR34934:SF1">
    <property type="entry name" value="FLAVIN-DEPENDENT THYMIDYLATE SYNTHASE"/>
    <property type="match status" value="1"/>
</dbReference>
<dbReference type="Pfam" id="PF02511">
    <property type="entry name" value="Thy1"/>
    <property type="match status" value="1"/>
</dbReference>
<dbReference type="SUPFAM" id="SSF69796">
    <property type="entry name" value="Thymidylate synthase-complementing protein Thy1"/>
    <property type="match status" value="1"/>
</dbReference>
<dbReference type="PROSITE" id="PS51331">
    <property type="entry name" value="THYX"/>
    <property type="match status" value="1"/>
</dbReference>
<reference key="1">
    <citation type="journal article" date="2006" name="J. Bacteriol.">
        <title>Comparative genomic analysis of three strains of Ehrlichia ruminantium reveals an active process of genome size plasticity.</title>
        <authorList>
            <person name="Frutos R."/>
            <person name="Viari A."/>
            <person name="Ferraz C."/>
            <person name="Morgat A."/>
            <person name="Eychenie S."/>
            <person name="Kandassamy Y."/>
            <person name="Chantal I."/>
            <person name="Bensaid A."/>
            <person name="Coissac E."/>
            <person name="Vachiery N."/>
            <person name="Demaille J."/>
            <person name="Martinez D."/>
        </authorList>
    </citation>
    <scope>NUCLEOTIDE SEQUENCE [LARGE SCALE GENOMIC DNA]</scope>
    <source>
        <strain>Gardel</strain>
    </source>
</reference>
<comment type="function">
    <text evidence="1">Catalyzes the reductive methylation of 2'-deoxyuridine-5'-monophosphate (dUMP) to 2'-deoxythymidine-5'-monophosphate (dTMP) while utilizing 5,10-methylenetetrahydrofolate (mTHF) as the methyl donor, and NADPH and FADH(2) as the reductant.</text>
</comment>
<comment type="catalytic activity">
    <reaction evidence="1">
        <text>dUMP + (6R)-5,10-methylene-5,6,7,8-tetrahydrofolate + NADPH + H(+) = dTMP + (6S)-5,6,7,8-tetrahydrofolate + NADP(+)</text>
        <dbReference type="Rhea" id="RHEA:29043"/>
        <dbReference type="ChEBI" id="CHEBI:15378"/>
        <dbReference type="ChEBI" id="CHEBI:15636"/>
        <dbReference type="ChEBI" id="CHEBI:57453"/>
        <dbReference type="ChEBI" id="CHEBI:57783"/>
        <dbReference type="ChEBI" id="CHEBI:58349"/>
        <dbReference type="ChEBI" id="CHEBI:63528"/>
        <dbReference type="ChEBI" id="CHEBI:246422"/>
        <dbReference type="EC" id="2.1.1.148"/>
    </reaction>
</comment>
<comment type="cofactor">
    <cofactor evidence="1">
        <name>FAD</name>
        <dbReference type="ChEBI" id="CHEBI:57692"/>
    </cofactor>
    <text evidence="1">Binds 4 FAD per tetramer. Each FAD binding site is formed by three monomers.</text>
</comment>
<comment type="pathway">
    <text evidence="1">Pyrimidine metabolism; dTTP biosynthesis.</text>
</comment>
<comment type="subunit">
    <text evidence="1">Homotetramer.</text>
</comment>
<comment type="similarity">
    <text evidence="1">Belongs to the thymidylate synthase ThyX family.</text>
</comment>
<gene>
    <name evidence="1" type="primary">thyX</name>
    <name type="ordered locus">ERGA_CDS_07060</name>
</gene>
<keyword id="KW-0274">FAD</keyword>
<keyword id="KW-0285">Flavoprotein</keyword>
<keyword id="KW-0489">Methyltransferase</keyword>
<keyword id="KW-0521">NADP</keyword>
<keyword id="KW-0545">Nucleotide biosynthesis</keyword>
<keyword id="KW-0808">Transferase</keyword>
<organism>
    <name type="scientific">Ehrlichia ruminantium (strain Gardel)</name>
    <dbReference type="NCBI Taxonomy" id="302409"/>
    <lineage>
        <taxon>Bacteria</taxon>
        <taxon>Pseudomonadati</taxon>
        <taxon>Pseudomonadota</taxon>
        <taxon>Alphaproteobacteria</taxon>
        <taxon>Rickettsiales</taxon>
        <taxon>Anaplasmataceae</taxon>
        <taxon>Ehrlichia</taxon>
    </lineage>
</organism>
<accession>Q5FG35</accession>
<evidence type="ECO:0000255" key="1">
    <source>
        <dbReference type="HAMAP-Rule" id="MF_01408"/>
    </source>
</evidence>
<evidence type="ECO:0000255" key="2">
    <source>
        <dbReference type="PROSITE-ProRule" id="PRU00661"/>
    </source>
</evidence>
<proteinExistence type="inferred from homology"/>
<feature type="chain" id="PRO_0000175562" description="Flavin-dependent thymidylate synthase">
    <location>
        <begin position="1"/>
        <end position="297"/>
    </location>
</feature>
<feature type="domain" description="ThyX" evidence="2">
    <location>
        <begin position="41"/>
        <end position="251"/>
    </location>
</feature>
<feature type="short sequence motif" description="ThyX motif" evidence="1">
    <location>
        <begin position="110"/>
        <end position="120"/>
    </location>
</feature>
<feature type="active site" description="Involved in ionization of N3 of dUMP, leading to its activation" evidence="1">
    <location>
        <position position="217"/>
    </location>
</feature>
<feature type="binding site" evidence="1">
    <location>
        <position position="87"/>
    </location>
    <ligand>
        <name>FAD</name>
        <dbReference type="ChEBI" id="CHEBI:57692"/>
        <note>ligand shared between neighboring subunits</note>
    </ligand>
</feature>
<feature type="binding site" evidence="1">
    <location>
        <begin position="107"/>
        <end position="110"/>
    </location>
    <ligand>
        <name>dUMP</name>
        <dbReference type="ChEBI" id="CHEBI:246422"/>
        <note>ligand shared between dimeric partners</note>
    </ligand>
</feature>
<feature type="binding site" evidence="1">
    <location>
        <begin position="110"/>
        <end position="112"/>
    </location>
    <ligand>
        <name>FAD</name>
        <dbReference type="ChEBI" id="CHEBI:57692"/>
        <note>ligand shared between neighboring subunits</note>
    </ligand>
</feature>
<feature type="binding site" description="in other chain" evidence="1">
    <location>
        <begin position="118"/>
        <end position="122"/>
    </location>
    <ligand>
        <name>dUMP</name>
        <dbReference type="ChEBI" id="CHEBI:246422"/>
        <note>ligand shared between dimeric partners</note>
    </ligand>
</feature>
<feature type="binding site" evidence="1">
    <location>
        <position position="118"/>
    </location>
    <ligand>
        <name>FAD</name>
        <dbReference type="ChEBI" id="CHEBI:57692"/>
        <note>ligand shared between neighboring subunits</note>
    </ligand>
</feature>
<feature type="binding site" description="in other chain" evidence="1">
    <location>
        <position position="190"/>
    </location>
    <ligand>
        <name>dUMP</name>
        <dbReference type="ChEBI" id="CHEBI:246422"/>
        <note>ligand shared between dimeric partners</note>
    </ligand>
</feature>
<feature type="binding site" evidence="1">
    <location>
        <begin position="206"/>
        <end position="208"/>
    </location>
    <ligand>
        <name>FAD</name>
        <dbReference type="ChEBI" id="CHEBI:57692"/>
        <note>ligand shared between neighboring subunits</note>
    </ligand>
</feature>
<feature type="binding site" evidence="1">
    <location>
        <position position="212"/>
    </location>
    <ligand>
        <name>FAD</name>
        <dbReference type="ChEBI" id="CHEBI:57692"/>
        <note>ligand shared between neighboring subunits</note>
    </ligand>
</feature>
<feature type="binding site" evidence="1">
    <location>
        <position position="217"/>
    </location>
    <ligand>
        <name>dUMP</name>
        <dbReference type="ChEBI" id="CHEBI:246422"/>
        <note>ligand shared between dimeric partners</note>
    </ligand>
</feature>